<accession>Q45223</accession>
<feature type="chain" id="PRO_0000109256" description="3-hydroxybutyryl-CoA dehydrogenase">
    <location>
        <begin position="1"/>
        <end position="293"/>
    </location>
</feature>
<feature type="site" description="Important for catalytic activity" evidence="1">
    <location>
        <position position="142"/>
    </location>
</feature>
<reference key="1">
    <citation type="submission" date="1995-07" db="EMBL/GenBank/DDBJ databases">
        <authorList>
            <person name="Weidenhaupt M."/>
            <person name="Rossi P."/>
            <person name="Beck C."/>
            <person name="Fischer H.-M."/>
            <person name="Hennecke H."/>
        </authorList>
    </citation>
    <scope>NUCLEOTIDE SEQUENCE [GENOMIC DNA]</scope>
    <source>
        <strain>USDA 3I1b110</strain>
    </source>
</reference>
<reference key="2">
    <citation type="journal article" date="2002" name="DNA Res.">
        <title>Complete genomic sequence of nitrogen-fixing symbiotic bacterium Bradyrhizobium japonicum USDA110.</title>
        <authorList>
            <person name="Kaneko T."/>
            <person name="Nakamura Y."/>
            <person name="Sato S."/>
            <person name="Minamisawa K."/>
            <person name="Uchiumi T."/>
            <person name="Sasamoto S."/>
            <person name="Watanabe A."/>
            <person name="Idesawa K."/>
            <person name="Iriguchi M."/>
            <person name="Kawashima K."/>
            <person name="Kohara M."/>
            <person name="Matsumoto M."/>
            <person name="Shimpo S."/>
            <person name="Tsuruoka H."/>
            <person name="Wada T."/>
            <person name="Yamada M."/>
            <person name="Tabata S."/>
        </authorList>
    </citation>
    <scope>NUCLEOTIDE SEQUENCE [LARGE SCALE GENOMIC DNA]</scope>
    <source>
        <strain>JCM 10833 / BCRC 13528 / IAM 13628 / NBRC 14792 / USDA 110</strain>
    </source>
</reference>
<organism>
    <name type="scientific">Bradyrhizobium diazoefficiens (strain JCM 10833 / BCRC 13528 / IAM 13628 / NBRC 14792 / USDA 110)</name>
    <dbReference type="NCBI Taxonomy" id="224911"/>
    <lineage>
        <taxon>Bacteria</taxon>
        <taxon>Pseudomonadati</taxon>
        <taxon>Pseudomonadota</taxon>
        <taxon>Alphaproteobacteria</taxon>
        <taxon>Hyphomicrobiales</taxon>
        <taxon>Nitrobacteraceae</taxon>
        <taxon>Bradyrhizobium</taxon>
    </lineage>
</organism>
<name>HBD_BRADU</name>
<sequence length="293" mass="31716">MAAVIKKVGVIGAGQMGNGIAHVAALAGFDVVLNDVSADRLKSGMATINGNLARQVSKKVVTEEAKTKALSRIVAAEKLDDLADCDLVIETAVEKEEVKRKIFHELCAVLKPEAIVASDTSSISITRLAAATDRPERFIGIHFMNPVPLMELVELIRGIATDDATFEASKEFVAKLGKQVAVSEDFPAFIVNRILLPMINEAIYTLYEGVGNVEAIDAAMKLGAHHPMGPLELADFIGLDTCLSIMQVLHEGLADSKYRPCPLLVKYVEAGWLGRKTQRGFYDYRGAKPVPTR</sequence>
<keyword id="KW-0276">Fatty acid metabolism</keyword>
<keyword id="KW-0443">Lipid metabolism</keyword>
<keyword id="KW-0521">NADP</keyword>
<keyword id="KW-0560">Oxidoreductase</keyword>
<keyword id="KW-1185">Reference proteome</keyword>
<comment type="catalytic activity">
    <reaction>
        <text>(3S)-3-hydroxybutanoyl-CoA + NADP(+) = acetoacetyl-CoA + NADPH + H(+)</text>
        <dbReference type="Rhea" id="RHEA:16197"/>
        <dbReference type="ChEBI" id="CHEBI:15378"/>
        <dbReference type="ChEBI" id="CHEBI:57286"/>
        <dbReference type="ChEBI" id="CHEBI:57316"/>
        <dbReference type="ChEBI" id="CHEBI:57783"/>
        <dbReference type="ChEBI" id="CHEBI:58349"/>
        <dbReference type="EC" id="1.1.1.157"/>
    </reaction>
</comment>
<comment type="pathway">
    <text>Lipid metabolism; butanoate metabolism.</text>
</comment>
<comment type="similarity">
    <text evidence="2">Belongs to the 3-hydroxyacyl-CoA dehydrogenase family.</text>
</comment>
<dbReference type="EC" id="1.1.1.157"/>
<dbReference type="EMBL" id="U32229">
    <property type="protein sequence ID" value="AAB00905.1"/>
    <property type="molecule type" value="Genomic_DNA"/>
</dbReference>
<dbReference type="EMBL" id="BA000040">
    <property type="protein sequence ID" value="BAC46644.1"/>
    <property type="molecule type" value="Genomic_DNA"/>
</dbReference>
<dbReference type="RefSeq" id="NP_768019.1">
    <property type="nucleotide sequence ID" value="NC_004463.1"/>
</dbReference>
<dbReference type="RefSeq" id="WP_011084197.1">
    <property type="nucleotide sequence ID" value="NC_004463.1"/>
</dbReference>
<dbReference type="SMR" id="Q45223"/>
<dbReference type="FunCoup" id="Q45223">
    <property type="interactions" value="439"/>
</dbReference>
<dbReference type="STRING" id="224911.AAV28_03805"/>
<dbReference type="EnsemblBacteria" id="BAC46644">
    <property type="protein sequence ID" value="BAC46644"/>
    <property type="gene ID" value="BAC46644"/>
</dbReference>
<dbReference type="GeneID" id="46488647"/>
<dbReference type="KEGG" id="bja:blr1379"/>
<dbReference type="PATRIC" id="fig|224911.44.peg.801"/>
<dbReference type="eggNOG" id="COG1250">
    <property type="taxonomic scope" value="Bacteria"/>
</dbReference>
<dbReference type="HOGENOM" id="CLU_009834_2_0_5"/>
<dbReference type="InParanoid" id="Q45223"/>
<dbReference type="OrthoDB" id="9771883at2"/>
<dbReference type="PhylomeDB" id="Q45223"/>
<dbReference type="UniPathway" id="UPA00863"/>
<dbReference type="Proteomes" id="UP000002526">
    <property type="component" value="Chromosome"/>
</dbReference>
<dbReference type="GO" id="GO:0008691">
    <property type="term" value="F:3-hydroxybutyryl-CoA dehydrogenase activity"/>
    <property type="evidence" value="ECO:0007669"/>
    <property type="project" value="UniProtKB-EC"/>
</dbReference>
<dbReference type="GO" id="GO:0070403">
    <property type="term" value="F:NAD+ binding"/>
    <property type="evidence" value="ECO:0007669"/>
    <property type="project" value="InterPro"/>
</dbReference>
<dbReference type="GO" id="GO:0016491">
    <property type="term" value="F:oxidoreductase activity"/>
    <property type="evidence" value="ECO:0000318"/>
    <property type="project" value="GO_Central"/>
</dbReference>
<dbReference type="GO" id="GO:0019605">
    <property type="term" value="P:butyrate metabolic process"/>
    <property type="evidence" value="ECO:0007669"/>
    <property type="project" value="UniProtKB-UniPathway"/>
</dbReference>
<dbReference type="GO" id="GO:0009056">
    <property type="term" value="P:catabolic process"/>
    <property type="evidence" value="ECO:0007669"/>
    <property type="project" value="UniProtKB-ARBA"/>
</dbReference>
<dbReference type="FunFam" id="1.10.1040.10:FF:000010">
    <property type="entry name" value="3-hydroxybutyryl-CoA dehydrogenase"/>
    <property type="match status" value="1"/>
</dbReference>
<dbReference type="FunFam" id="3.40.50.720:FF:000009">
    <property type="entry name" value="Fatty oxidation complex, alpha subunit"/>
    <property type="match status" value="1"/>
</dbReference>
<dbReference type="Gene3D" id="1.10.1040.10">
    <property type="entry name" value="N-(1-d-carboxylethyl)-l-norvaline Dehydrogenase, domain 2"/>
    <property type="match status" value="1"/>
</dbReference>
<dbReference type="Gene3D" id="3.40.50.720">
    <property type="entry name" value="NAD(P)-binding Rossmann-like Domain"/>
    <property type="match status" value="1"/>
</dbReference>
<dbReference type="InterPro" id="IPR022694">
    <property type="entry name" value="3-OHacyl-CoA_DH"/>
</dbReference>
<dbReference type="InterPro" id="IPR006180">
    <property type="entry name" value="3-OHacyl-CoA_DH_CS"/>
</dbReference>
<dbReference type="InterPro" id="IPR006176">
    <property type="entry name" value="3-OHacyl-CoA_DH_NAD-bd"/>
</dbReference>
<dbReference type="InterPro" id="IPR006108">
    <property type="entry name" value="3HC_DH_C"/>
</dbReference>
<dbReference type="InterPro" id="IPR008927">
    <property type="entry name" value="6-PGluconate_DH-like_C_sf"/>
</dbReference>
<dbReference type="InterPro" id="IPR013328">
    <property type="entry name" value="6PGD_dom2"/>
</dbReference>
<dbReference type="InterPro" id="IPR036291">
    <property type="entry name" value="NAD(P)-bd_dom_sf"/>
</dbReference>
<dbReference type="NCBIfam" id="NF004474">
    <property type="entry name" value="PRK05808.1"/>
    <property type="match status" value="1"/>
</dbReference>
<dbReference type="NCBIfam" id="NF005715">
    <property type="entry name" value="PRK07530.1"/>
    <property type="match status" value="1"/>
</dbReference>
<dbReference type="PANTHER" id="PTHR48075">
    <property type="entry name" value="3-HYDROXYACYL-COA DEHYDROGENASE FAMILY PROTEIN"/>
    <property type="match status" value="1"/>
</dbReference>
<dbReference type="PANTHER" id="PTHR48075:SF5">
    <property type="entry name" value="3-HYDROXYBUTYRYL-COA DEHYDROGENASE"/>
    <property type="match status" value="1"/>
</dbReference>
<dbReference type="Pfam" id="PF00725">
    <property type="entry name" value="3HCDH"/>
    <property type="match status" value="1"/>
</dbReference>
<dbReference type="Pfam" id="PF02737">
    <property type="entry name" value="3HCDH_N"/>
    <property type="match status" value="1"/>
</dbReference>
<dbReference type="PIRSF" id="PIRSF000105">
    <property type="entry name" value="HCDH"/>
    <property type="match status" value="1"/>
</dbReference>
<dbReference type="SUPFAM" id="SSF48179">
    <property type="entry name" value="6-phosphogluconate dehydrogenase C-terminal domain-like"/>
    <property type="match status" value="1"/>
</dbReference>
<dbReference type="SUPFAM" id="SSF51735">
    <property type="entry name" value="NAD(P)-binding Rossmann-fold domains"/>
    <property type="match status" value="1"/>
</dbReference>
<dbReference type="PROSITE" id="PS00067">
    <property type="entry name" value="3HCDH"/>
    <property type="match status" value="1"/>
</dbReference>
<evidence type="ECO:0000250" key="1"/>
<evidence type="ECO:0000305" key="2"/>
<protein>
    <recommendedName>
        <fullName>3-hydroxybutyryl-CoA dehydrogenase</fullName>
        <ecNumber>1.1.1.157</ecNumber>
    </recommendedName>
    <alternativeName>
        <fullName>Beta-hydroxybutyryl-CoA dehydrogenase</fullName>
        <shortName>BHBD</shortName>
    </alternativeName>
</protein>
<gene>
    <name type="primary">hbdA</name>
    <name type="ordered locus">blr1379</name>
</gene>
<proteinExistence type="inferred from homology"/>